<accession>Q3UH66</accession>
<accession>Q3V387</accession>
<accession>Q6PAN9</accession>
<accession>Q6ZPI6</accession>
<accession>Q7TNS1</accession>
<accession>Q811F2</accession>
<reference key="1">
    <citation type="journal article" date="2009" name="PLoS Biol.">
        <title>Lineage-specific biology revealed by a finished genome assembly of the mouse.</title>
        <authorList>
            <person name="Church D.M."/>
            <person name="Goodstadt L."/>
            <person name="Hillier L.W."/>
            <person name="Zody M.C."/>
            <person name="Goldstein S."/>
            <person name="She X."/>
            <person name="Bult C.J."/>
            <person name="Agarwala R."/>
            <person name="Cherry J.L."/>
            <person name="DiCuccio M."/>
            <person name="Hlavina W."/>
            <person name="Kapustin Y."/>
            <person name="Meric P."/>
            <person name="Maglott D."/>
            <person name="Birtle Z."/>
            <person name="Marques A.C."/>
            <person name="Graves T."/>
            <person name="Zhou S."/>
            <person name="Teague B."/>
            <person name="Potamousis K."/>
            <person name="Churas C."/>
            <person name="Place M."/>
            <person name="Herschleb J."/>
            <person name="Runnheim R."/>
            <person name="Forrest D."/>
            <person name="Amos-Landgraf J."/>
            <person name="Schwartz D.C."/>
            <person name="Cheng Z."/>
            <person name="Lindblad-Toh K."/>
            <person name="Eichler E.E."/>
            <person name="Ponting C.P."/>
        </authorList>
    </citation>
    <scope>NUCLEOTIDE SEQUENCE [LARGE SCALE GENOMIC DNA]</scope>
    <source>
        <strain>C57BL/6J</strain>
    </source>
</reference>
<reference key="2">
    <citation type="journal article" date="2005" name="Science">
        <title>The transcriptional landscape of the mammalian genome.</title>
        <authorList>
            <person name="Carninci P."/>
            <person name="Kasukawa T."/>
            <person name="Katayama S."/>
            <person name="Gough J."/>
            <person name="Frith M.C."/>
            <person name="Maeda N."/>
            <person name="Oyama R."/>
            <person name="Ravasi T."/>
            <person name="Lenhard B."/>
            <person name="Wells C."/>
            <person name="Kodzius R."/>
            <person name="Shimokawa K."/>
            <person name="Bajic V.B."/>
            <person name="Brenner S.E."/>
            <person name="Batalov S."/>
            <person name="Forrest A.R."/>
            <person name="Zavolan M."/>
            <person name="Davis M.J."/>
            <person name="Wilming L.G."/>
            <person name="Aidinis V."/>
            <person name="Allen J.E."/>
            <person name="Ambesi-Impiombato A."/>
            <person name="Apweiler R."/>
            <person name="Aturaliya R.N."/>
            <person name="Bailey T.L."/>
            <person name="Bansal M."/>
            <person name="Baxter L."/>
            <person name="Beisel K.W."/>
            <person name="Bersano T."/>
            <person name="Bono H."/>
            <person name="Chalk A.M."/>
            <person name="Chiu K.P."/>
            <person name="Choudhary V."/>
            <person name="Christoffels A."/>
            <person name="Clutterbuck D.R."/>
            <person name="Crowe M.L."/>
            <person name="Dalla E."/>
            <person name="Dalrymple B.P."/>
            <person name="de Bono B."/>
            <person name="Della Gatta G."/>
            <person name="di Bernardo D."/>
            <person name="Down T."/>
            <person name="Engstrom P."/>
            <person name="Fagiolini M."/>
            <person name="Faulkner G."/>
            <person name="Fletcher C.F."/>
            <person name="Fukushima T."/>
            <person name="Furuno M."/>
            <person name="Futaki S."/>
            <person name="Gariboldi M."/>
            <person name="Georgii-Hemming P."/>
            <person name="Gingeras T.R."/>
            <person name="Gojobori T."/>
            <person name="Green R.E."/>
            <person name="Gustincich S."/>
            <person name="Harbers M."/>
            <person name="Hayashi Y."/>
            <person name="Hensch T.K."/>
            <person name="Hirokawa N."/>
            <person name="Hill D."/>
            <person name="Huminiecki L."/>
            <person name="Iacono M."/>
            <person name="Ikeo K."/>
            <person name="Iwama A."/>
            <person name="Ishikawa T."/>
            <person name="Jakt M."/>
            <person name="Kanapin A."/>
            <person name="Katoh M."/>
            <person name="Kawasawa Y."/>
            <person name="Kelso J."/>
            <person name="Kitamura H."/>
            <person name="Kitano H."/>
            <person name="Kollias G."/>
            <person name="Krishnan S.P."/>
            <person name="Kruger A."/>
            <person name="Kummerfeld S.K."/>
            <person name="Kurochkin I.V."/>
            <person name="Lareau L.F."/>
            <person name="Lazarevic D."/>
            <person name="Lipovich L."/>
            <person name="Liu J."/>
            <person name="Liuni S."/>
            <person name="McWilliam S."/>
            <person name="Madan Babu M."/>
            <person name="Madera M."/>
            <person name="Marchionni L."/>
            <person name="Matsuda H."/>
            <person name="Matsuzawa S."/>
            <person name="Miki H."/>
            <person name="Mignone F."/>
            <person name="Miyake S."/>
            <person name="Morris K."/>
            <person name="Mottagui-Tabar S."/>
            <person name="Mulder N."/>
            <person name="Nakano N."/>
            <person name="Nakauchi H."/>
            <person name="Ng P."/>
            <person name="Nilsson R."/>
            <person name="Nishiguchi S."/>
            <person name="Nishikawa S."/>
            <person name="Nori F."/>
            <person name="Ohara O."/>
            <person name="Okazaki Y."/>
            <person name="Orlando V."/>
            <person name="Pang K.C."/>
            <person name="Pavan W.J."/>
            <person name="Pavesi G."/>
            <person name="Pesole G."/>
            <person name="Petrovsky N."/>
            <person name="Piazza S."/>
            <person name="Reed J."/>
            <person name="Reid J.F."/>
            <person name="Ring B.Z."/>
            <person name="Ringwald M."/>
            <person name="Rost B."/>
            <person name="Ruan Y."/>
            <person name="Salzberg S.L."/>
            <person name="Sandelin A."/>
            <person name="Schneider C."/>
            <person name="Schoenbach C."/>
            <person name="Sekiguchi K."/>
            <person name="Semple C.A."/>
            <person name="Seno S."/>
            <person name="Sessa L."/>
            <person name="Sheng Y."/>
            <person name="Shibata Y."/>
            <person name="Shimada H."/>
            <person name="Shimada K."/>
            <person name="Silva D."/>
            <person name="Sinclair B."/>
            <person name="Sperling S."/>
            <person name="Stupka E."/>
            <person name="Sugiura K."/>
            <person name="Sultana R."/>
            <person name="Takenaka Y."/>
            <person name="Taki K."/>
            <person name="Tammoja K."/>
            <person name="Tan S.L."/>
            <person name="Tang S."/>
            <person name="Taylor M.S."/>
            <person name="Tegner J."/>
            <person name="Teichmann S.A."/>
            <person name="Ueda H.R."/>
            <person name="van Nimwegen E."/>
            <person name="Verardo R."/>
            <person name="Wei C.L."/>
            <person name="Yagi K."/>
            <person name="Yamanishi H."/>
            <person name="Zabarovsky E."/>
            <person name="Zhu S."/>
            <person name="Zimmer A."/>
            <person name="Hide W."/>
            <person name="Bult C."/>
            <person name="Grimmond S.M."/>
            <person name="Teasdale R.D."/>
            <person name="Liu E.T."/>
            <person name="Brusic V."/>
            <person name="Quackenbush J."/>
            <person name="Wahlestedt C."/>
            <person name="Mattick J.S."/>
            <person name="Hume D.A."/>
            <person name="Kai C."/>
            <person name="Sasaki D."/>
            <person name="Tomaru Y."/>
            <person name="Fukuda S."/>
            <person name="Kanamori-Katayama M."/>
            <person name="Suzuki M."/>
            <person name="Aoki J."/>
            <person name="Arakawa T."/>
            <person name="Iida J."/>
            <person name="Imamura K."/>
            <person name="Itoh M."/>
            <person name="Kato T."/>
            <person name="Kawaji H."/>
            <person name="Kawagashira N."/>
            <person name="Kawashima T."/>
            <person name="Kojima M."/>
            <person name="Kondo S."/>
            <person name="Konno H."/>
            <person name="Nakano K."/>
            <person name="Ninomiya N."/>
            <person name="Nishio T."/>
            <person name="Okada M."/>
            <person name="Plessy C."/>
            <person name="Shibata K."/>
            <person name="Shiraki T."/>
            <person name="Suzuki S."/>
            <person name="Tagami M."/>
            <person name="Waki K."/>
            <person name="Watahiki A."/>
            <person name="Okamura-Oho Y."/>
            <person name="Suzuki H."/>
            <person name="Kawai J."/>
            <person name="Hayashizaki Y."/>
        </authorList>
    </citation>
    <scope>NUCLEOTIDE SEQUENCE [LARGE SCALE MRNA] (ISOFORM 2)</scope>
    <scope>NUCLEOTIDE SEQUENCE [LARGE SCALE MRNA] OF 1506-2149 (ISOFORM 5)</scope>
    <source>
        <strain>C57BL/6J</strain>
        <tissue>Retina</tissue>
    </source>
</reference>
<reference key="3">
    <citation type="journal article" date="2004" name="Genome Res.">
        <title>The status, quality, and expansion of the NIH full-length cDNA project: the Mammalian Gene Collection (MGC).</title>
        <authorList>
            <consortium name="The MGC Project Team"/>
        </authorList>
    </citation>
    <scope>NUCLEOTIDE SEQUENCE [LARGE SCALE MRNA] OF 443-2149 (ISOFORM 6)</scope>
    <scope>NUCLEOTIDE SEQUENCE [LARGE SCALE MRNA] OF 801-2149 (ISOFORM 3)</scope>
    <scope>NUCLEOTIDE SEQUENCE [LARGE SCALE MRNA] OF 1513-2149 (ISOFORM 4)</scope>
    <source>
        <strain>C57BL/6J</strain>
        <strain>FVB/N</strain>
        <tissue>Brain</tissue>
        <tissue>Salivary gland</tissue>
    </source>
</reference>
<reference key="4">
    <citation type="journal article" date="2003" name="DNA Res.">
        <title>Prediction of the coding sequences of mouse homologues of KIAA gene: III. The complete nucleotide sequences of 500 mouse KIAA-homologous cDNAs identified by screening of terminal sequences of cDNA clones randomly sampled from size-fractionated libraries.</title>
        <authorList>
            <person name="Okazaki N."/>
            <person name="Kikuno R."/>
            <person name="Ohara R."/>
            <person name="Inamoto S."/>
            <person name="Koseki H."/>
            <person name="Hiraoka S."/>
            <person name="Saga Y."/>
            <person name="Nagase T."/>
            <person name="Ohara O."/>
            <person name="Koga H."/>
        </authorList>
    </citation>
    <scope>NUCLEOTIDE SEQUENCE [LARGE SCALE MRNA] OF 761-2149 (ISOFORM 7)</scope>
    <source>
        <tissue>Brain</tissue>
    </source>
</reference>
<reference key="5">
    <citation type="journal article" date="2010" name="Cell">
        <title>A tissue-specific atlas of mouse protein phosphorylation and expression.</title>
        <authorList>
            <person name="Huttlin E.L."/>
            <person name="Jedrychowski M.P."/>
            <person name="Elias J.E."/>
            <person name="Goswami T."/>
            <person name="Rad R."/>
            <person name="Beausoleil S.A."/>
            <person name="Villen J."/>
            <person name="Haas W."/>
            <person name="Sowa M.E."/>
            <person name="Gygi S.P."/>
        </authorList>
    </citation>
    <scope>PHOSPHORYLATION [LARGE SCALE ANALYSIS] AT SER-1725 AND SER-1726</scope>
    <scope>IDENTIFICATION BY MASS SPECTROMETRY [LARGE SCALE ANALYSIS]</scope>
    <source>
        <tissue>Brain</tissue>
        <tissue>Heart</tissue>
        <tissue>Pancreas</tissue>
    </source>
</reference>
<reference key="6">
    <citation type="journal article" date="2011" name="J. Biol. Chem.">
        <title>WNK2 is a novel regulator of essential neuronal cation-chloride cotransporters.</title>
        <authorList>
            <person name="Rinehart J."/>
            <person name="Vazquez N."/>
            <person name="Kahle K.T."/>
            <person name="Hodson C.A."/>
            <person name="Ring A.M."/>
            <person name="Gulcicek E.E."/>
            <person name="Louvi A."/>
            <person name="Bobadilla N.A."/>
            <person name="Gamba G."/>
            <person name="Lifton R.P."/>
        </authorList>
    </citation>
    <scope>FUNCTION</scope>
    <scope>TISSUE SPECIFICITY</scope>
    <scope>PHOSPHORYLATION AT SER-1566; SER-1770 AND SER-1797</scope>
    <scope>INTERACTION WITH STK39</scope>
</reference>
<reference key="7">
    <citation type="journal article" date="2014" name="Mol. Cell. Proteomics">
        <title>Immunoaffinity enrichment and mass spectrometry analysis of protein methylation.</title>
        <authorList>
            <person name="Guo A."/>
            <person name="Gu H."/>
            <person name="Zhou J."/>
            <person name="Mulhern D."/>
            <person name="Wang Y."/>
            <person name="Lee K.A."/>
            <person name="Yang V."/>
            <person name="Aguiar M."/>
            <person name="Kornhauser J."/>
            <person name="Jia X."/>
            <person name="Ren J."/>
            <person name="Beausoleil S.A."/>
            <person name="Silva J.C."/>
            <person name="Vemulapalli V."/>
            <person name="Bedford M.T."/>
            <person name="Comb M.J."/>
        </authorList>
    </citation>
    <scope>METHYLATION [LARGE SCALE ANALYSIS] AT ARG-19 AND ARG-30</scope>
    <scope>IDENTIFICATION BY MASS SPECTROMETRY [LARGE SCALE ANALYSIS]</scope>
    <source>
        <tissue>Brain</tissue>
    </source>
</reference>
<organism>
    <name type="scientific">Mus musculus</name>
    <name type="common">Mouse</name>
    <dbReference type="NCBI Taxonomy" id="10090"/>
    <lineage>
        <taxon>Eukaryota</taxon>
        <taxon>Metazoa</taxon>
        <taxon>Chordata</taxon>
        <taxon>Craniata</taxon>
        <taxon>Vertebrata</taxon>
        <taxon>Euteleostomi</taxon>
        <taxon>Mammalia</taxon>
        <taxon>Eutheria</taxon>
        <taxon>Euarchontoglires</taxon>
        <taxon>Glires</taxon>
        <taxon>Rodentia</taxon>
        <taxon>Myomorpha</taxon>
        <taxon>Muroidea</taxon>
        <taxon>Muridae</taxon>
        <taxon>Murinae</taxon>
        <taxon>Mus</taxon>
        <taxon>Mus</taxon>
    </lineage>
</organism>
<keyword id="KW-0025">Alternative splicing</keyword>
<keyword id="KW-0067">ATP-binding</keyword>
<keyword id="KW-1003">Cell membrane</keyword>
<keyword id="KW-0963">Cytoplasm</keyword>
<keyword id="KW-0418">Kinase</keyword>
<keyword id="KW-0472">Membrane</keyword>
<keyword id="KW-0488">Methylation</keyword>
<keyword id="KW-0547">Nucleotide-binding</keyword>
<keyword id="KW-0597">Phosphoprotein</keyword>
<keyword id="KW-1185">Reference proteome</keyword>
<keyword id="KW-0723">Serine/threonine-protein kinase</keyword>
<keyword id="KW-0808">Transferase</keyword>
<proteinExistence type="evidence at protein level"/>
<dbReference type="EC" id="2.7.11.1" evidence="1"/>
<dbReference type="EMBL" id="CAAA01187366">
    <property type="status" value="NOT_ANNOTATED_CDS"/>
    <property type="molecule type" value="Genomic_DNA"/>
</dbReference>
<dbReference type="EMBL" id="AC140284">
    <property type="status" value="NOT_ANNOTATED_CDS"/>
    <property type="molecule type" value="Genomic_DNA"/>
</dbReference>
<dbReference type="EMBL" id="AK044381">
    <property type="protein sequence ID" value="BAE20646.1"/>
    <property type="status" value="ALT_INIT"/>
    <property type="molecule type" value="mRNA"/>
</dbReference>
<dbReference type="EMBL" id="AK147550">
    <property type="protein sequence ID" value="BAE27991.1"/>
    <property type="molecule type" value="mRNA"/>
</dbReference>
<dbReference type="EMBL" id="BC046464">
    <property type="protein sequence ID" value="AAH46464.1"/>
    <property type="status" value="ALT_INIT"/>
    <property type="molecule type" value="mRNA"/>
</dbReference>
<dbReference type="EMBL" id="BC055795">
    <property type="protein sequence ID" value="AAH55795.1"/>
    <property type="status" value="ALT_INIT"/>
    <property type="molecule type" value="mRNA"/>
</dbReference>
<dbReference type="EMBL" id="BC060187">
    <property type="protein sequence ID" value="AAH60187.1"/>
    <property type="molecule type" value="mRNA"/>
</dbReference>
<dbReference type="EMBL" id="AK129439">
    <property type="protein sequence ID" value="BAC98249.1"/>
    <property type="molecule type" value="mRNA"/>
</dbReference>
<dbReference type="CCDS" id="CCDS70454.1">
    <molecule id="Q3UH66-5"/>
</dbReference>
<dbReference type="CCDS" id="CCDS70455.1">
    <molecule id="Q3UH66-3"/>
</dbReference>
<dbReference type="RefSeq" id="NP_001277240.1">
    <property type="nucleotide sequence ID" value="NM_001290311.1"/>
</dbReference>
<dbReference type="RefSeq" id="NP_001277242.1">
    <property type="nucleotide sequence ID" value="NM_001290313.1"/>
</dbReference>
<dbReference type="RefSeq" id="NP_083637.2">
    <property type="nucleotide sequence ID" value="NM_029361.4"/>
</dbReference>
<dbReference type="SMR" id="Q3UH66"/>
<dbReference type="BioGRID" id="217612">
    <property type="interactions" value="14"/>
</dbReference>
<dbReference type="FunCoup" id="Q3UH66">
    <property type="interactions" value="760"/>
</dbReference>
<dbReference type="IntAct" id="Q3UH66">
    <property type="interactions" value="3"/>
</dbReference>
<dbReference type="MINT" id="Q3UH66"/>
<dbReference type="STRING" id="10090.ENSMUSP00000089212"/>
<dbReference type="GlyGen" id="Q3UH66">
    <property type="glycosylation" value="9 sites, 1 O-linked glycan (4 sites)"/>
</dbReference>
<dbReference type="iPTMnet" id="Q3UH66"/>
<dbReference type="PhosphoSitePlus" id="Q3UH66"/>
<dbReference type="SwissPalm" id="Q3UH66"/>
<dbReference type="jPOST" id="Q3UH66"/>
<dbReference type="PaxDb" id="10090-ENSMUSP00000089212"/>
<dbReference type="PeptideAtlas" id="Q3UH66"/>
<dbReference type="ProteomicsDB" id="299689">
    <molecule id="Q3UH66-1"/>
</dbReference>
<dbReference type="ProteomicsDB" id="299690">
    <molecule id="Q3UH66-2"/>
</dbReference>
<dbReference type="ProteomicsDB" id="299691">
    <molecule id="Q3UH66-3"/>
</dbReference>
<dbReference type="ProteomicsDB" id="299692">
    <molecule id="Q3UH66-4"/>
</dbReference>
<dbReference type="ProteomicsDB" id="299693">
    <molecule id="Q3UH66-5"/>
</dbReference>
<dbReference type="ProteomicsDB" id="299694">
    <molecule id="Q3UH66-6"/>
</dbReference>
<dbReference type="ProteomicsDB" id="299695">
    <molecule id="Q3UH66-7"/>
</dbReference>
<dbReference type="DNASU" id="75607"/>
<dbReference type="GeneID" id="75607"/>
<dbReference type="KEGG" id="mmu:75607"/>
<dbReference type="AGR" id="MGI:1922857"/>
<dbReference type="CTD" id="65268"/>
<dbReference type="MGI" id="MGI:1922857">
    <property type="gene designation" value="Wnk2"/>
</dbReference>
<dbReference type="eggNOG" id="KOG0584">
    <property type="taxonomic scope" value="Eukaryota"/>
</dbReference>
<dbReference type="InParanoid" id="Q3UH66"/>
<dbReference type="OrthoDB" id="4062651at2759"/>
<dbReference type="PhylomeDB" id="Q3UH66"/>
<dbReference type="BioGRID-ORCS" id="75607">
    <property type="hits" value="1 hit in 75 CRISPR screens"/>
</dbReference>
<dbReference type="CD-CODE" id="CE726F99">
    <property type="entry name" value="Postsynaptic density"/>
</dbReference>
<dbReference type="ChiTaRS" id="Wnk2">
    <property type="organism name" value="mouse"/>
</dbReference>
<dbReference type="PRO" id="PR:Q3UH66"/>
<dbReference type="Proteomes" id="UP000000589">
    <property type="component" value="Unplaced"/>
</dbReference>
<dbReference type="RNAct" id="Q3UH66">
    <property type="molecule type" value="protein"/>
</dbReference>
<dbReference type="GO" id="GO:0005737">
    <property type="term" value="C:cytoplasm"/>
    <property type="evidence" value="ECO:0007669"/>
    <property type="project" value="UniProtKB-SubCell"/>
</dbReference>
<dbReference type="GO" id="GO:0005886">
    <property type="term" value="C:plasma membrane"/>
    <property type="evidence" value="ECO:0007669"/>
    <property type="project" value="UniProtKB-SubCell"/>
</dbReference>
<dbReference type="GO" id="GO:0005524">
    <property type="term" value="F:ATP binding"/>
    <property type="evidence" value="ECO:0007669"/>
    <property type="project" value="UniProtKB-KW"/>
</dbReference>
<dbReference type="GO" id="GO:0106310">
    <property type="term" value="F:protein serine kinase activity"/>
    <property type="evidence" value="ECO:0007669"/>
    <property type="project" value="RHEA"/>
</dbReference>
<dbReference type="GO" id="GO:0004674">
    <property type="term" value="F:protein serine/threonine kinase activity"/>
    <property type="evidence" value="ECO:0007669"/>
    <property type="project" value="UniProtKB-KW"/>
</dbReference>
<dbReference type="GO" id="GO:0006468">
    <property type="term" value="P:protein phosphorylation"/>
    <property type="evidence" value="ECO:0000314"/>
    <property type="project" value="UniProtKB"/>
</dbReference>
<dbReference type="CDD" id="cd14032">
    <property type="entry name" value="STKc_WNK2_like"/>
    <property type="match status" value="1"/>
</dbReference>
<dbReference type="FunFam" id="3.10.20.90:FF:000007">
    <property type="entry name" value="Serine/threonine-protein kinase WNK1 isoform 1"/>
    <property type="match status" value="1"/>
</dbReference>
<dbReference type="FunFam" id="1.10.510.10:FF:000006">
    <property type="entry name" value="Serine/threonine-protein kinase WNK1 isoform 2"/>
    <property type="match status" value="1"/>
</dbReference>
<dbReference type="FunFam" id="3.10.20.90:FF:000012">
    <property type="entry name" value="Serine/threonine-protein kinase WNK1 isoform 2"/>
    <property type="match status" value="1"/>
</dbReference>
<dbReference type="FunFam" id="3.30.200.20:FF:000494">
    <property type="entry name" value="serine/threonine-protein kinase WNK2 isoform X2"/>
    <property type="match status" value="1"/>
</dbReference>
<dbReference type="Gene3D" id="3.10.20.90">
    <property type="entry name" value="Phosphatidylinositol 3-kinase Catalytic Subunit, Chain A, domain 1"/>
    <property type="match status" value="2"/>
</dbReference>
<dbReference type="Gene3D" id="3.30.200.20">
    <property type="entry name" value="Phosphorylase Kinase, domain 1"/>
    <property type="match status" value="1"/>
</dbReference>
<dbReference type="Gene3D" id="1.10.510.10">
    <property type="entry name" value="Transferase(Phosphotransferase) domain 1"/>
    <property type="match status" value="1"/>
</dbReference>
<dbReference type="InterPro" id="IPR056865">
    <property type="entry name" value="CCTL2_WNK"/>
</dbReference>
<dbReference type="InterPro" id="IPR011009">
    <property type="entry name" value="Kinase-like_dom_sf"/>
</dbReference>
<dbReference type="InterPro" id="IPR024678">
    <property type="entry name" value="Kinase_OSR1/WNK_CCT"/>
</dbReference>
<dbReference type="InterPro" id="IPR000719">
    <property type="entry name" value="Prot_kinase_dom"/>
</dbReference>
<dbReference type="InterPro" id="IPR008271">
    <property type="entry name" value="Ser/Thr_kinase_AS"/>
</dbReference>
<dbReference type="InterPro" id="IPR050588">
    <property type="entry name" value="WNK_Ser-Thr_kinase"/>
</dbReference>
<dbReference type="PANTHER" id="PTHR13902">
    <property type="entry name" value="SERINE/THREONINE-PROTEIN KINASE WNK WITH NO LYSINE -RELATED"/>
    <property type="match status" value="1"/>
</dbReference>
<dbReference type="Pfam" id="PF24889">
    <property type="entry name" value="CCTL2_WNK"/>
    <property type="match status" value="1"/>
</dbReference>
<dbReference type="Pfam" id="PF12202">
    <property type="entry name" value="OSR1_C"/>
    <property type="match status" value="1"/>
</dbReference>
<dbReference type="Pfam" id="PF00069">
    <property type="entry name" value="Pkinase"/>
    <property type="match status" value="1"/>
</dbReference>
<dbReference type="SMART" id="SM00220">
    <property type="entry name" value="S_TKc"/>
    <property type="match status" value="1"/>
</dbReference>
<dbReference type="SUPFAM" id="SSF56112">
    <property type="entry name" value="Protein kinase-like (PK-like)"/>
    <property type="match status" value="1"/>
</dbReference>
<dbReference type="PROSITE" id="PS50011">
    <property type="entry name" value="PROTEIN_KINASE_DOM"/>
    <property type="match status" value="1"/>
</dbReference>
<dbReference type="PROSITE" id="PS00108">
    <property type="entry name" value="PROTEIN_KINASE_ST"/>
    <property type="match status" value="1"/>
</dbReference>
<comment type="function">
    <text evidence="1 3 6">Serine/threonine-protein kinase component of the WNK2-SPAK/OSR1 kinase cascade, which plays an important role in the regulation of electrolyte homeostasis, cell signaling, survival, and proliferation (PubMed:21733846). The WNK2-SPAK/OSR1 kinase cascade is composed of WNK2, which mediates phosphorylation and activation of downstream kinases OXSR1/OSR1 and STK39/SPAK (By similarity). Following activation, OXSR1/OSR1 and STK39/SPAK catalyze phosphorylation of ion cotransporters, regulating their activity (By similarity). Acts as an activator and inhibitor of sodium-coupled chloride cotransporters and potassium-coupled chloride cotransporters respectively (PubMed:21733846). Activates SLC12A2, SCNN1A, SCNN1B, SCNN1D and SGK1 and inhibits SLC12A5 (PubMed:21733846). Negatively regulates the EGF-induced activation of the ERK/MAPK-pathway and the downstream cell cycle progression (By similarity). Affects MAPK3/MAPK1 activity by modulating the activity of MAP2K1 and this modulation depends on phosphorylation of MAP2K1 by PAK1 (By similarity). WNK2 acts by interfering with the activity of PAK1 by controlling the balance of the activity of upstream regulators of PAK1 activity, RHOA and RAC1, which display reciprocal activity (By similarity).</text>
</comment>
<comment type="catalytic activity">
    <reaction evidence="1">
        <text>L-seryl-[protein] + ATP = O-phospho-L-seryl-[protein] + ADP + H(+)</text>
        <dbReference type="Rhea" id="RHEA:17989"/>
        <dbReference type="Rhea" id="RHEA-COMP:9863"/>
        <dbReference type="Rhea" id="RHEA-COMP:11604"/>
        <dbReference type="ChEBI" id="CHEBI:15378"/>
        <dbReference type="ChEBI" id="CHEBI:29999"/>
        <dbReference type="ChEBI" id="CHEBI:30616"/>
        <dbReference type="ChEBI" id="CHEBI:83421"/>
        <dbReference type="ChEBI" id="CHEBI:456216"/>
        <dbReference type="EC" id="2.7.11.1"/>
    </reaction>
</comment>
<comment type="catalytic activity">
    <reaction evidence="1">
        <text>L-threonyl-[protein] + ATP = O-phospho-L-threonyl-[protein] + ADP + H(+)</text>
        <dbReference type="Rhea" id="RHEA:46608"/>
        <dbReference type="Rhea" id="RHEA-COMP:11060"/>
        <dbReference type="Rhea" id="RHEA-COMP:11605"/>
        <dbReference type="ChEBI" id="CHEBI:15378"/>
        <dbReference type="ChEBI" id="CHEBI:30013"/>
        <dbReference type="ChEBI" id="CHEBI:30616"/>
        <dbReference type="ChEBI" id="CHEBI:61977"/>
        <dbReference type="ChEBI" id="CHEBI:456216"/>
        <dbReference type="EC" id="2.7.11.1"/>
    </reaction>
</comment>
<comment type="cofactor">
    <cofactor evidence="1">
        <name>Mg(2+)</name>
        <dbReference type="ChEBI" id="CHEBI:18420"/>
    </cofactor>
</comment>
<comment type="activity regulation">
    <text evidence="2">Activation requires autophosphorylation of Ser-356 and, to a lower extent, Ser-352 (By similarity).</text>
</comment>
<comment type="subunit">
    <text evidence="6">Forms a complex with the phosphorylated form of STK39 in the brain.</text>
</comment>
<comment type="subcellular location">
    <subcellularLocation>
        <location evidence="3">Cytoplasm</location>
    </subcellularLocation>
    <subcellularLocation>
        <location evidence="3">Cell membrane</location>
    </subcellularLocation>
</comment>
<comment type="alternative products">
    <event type="alternative splicing"/>
    <isoform>
        <id>Q3UH66-1</id>
        <name>1</name>
        <sequence type="displayed"/>
    </isoform>
    <isoform>
        <id>Q3UH66-2</id>
        <name>2</name>
        <sequence type="described" ref="VSP_023369"/>
    </isoform>
    <isoform>
        <id>Q3UH66-3</id>
        <name>3</name>
        <sequence type="described" ref="VSP_023370 VSP_023372"/>
    </isoform>
    <isoform>
        <id>Q3UH66-4</id>
        <name>4</name>
        <sequence type="described" ref="VSP_023370 VSP_023371"/>
    </isoform>
    <isoform>
        <id>Q3UH66-5</id>
        <name>5</name>
        <sequence type="described" ref="VSP_023370 VSP_023372 VSP_023373"/>
    </isoform>
    <isoform>
        <id>Q3UH66-6</id>
        <name>6</name>
        <sequence type="described" ref="VSP_023366 VSP_023367 VSP_023370 VSP_023371"/>
    </isoform>
    <isoform>
        <id>Q3UH66-7</id>
        <name>7</name>
        <sequence type="described" ref="VSP_023367 VSP_023368 VSP_023370 VSP_023372 VSP_023374"/>
    </isoform>
</comment>
<comment type="tissue specificity">
    <text evidence="6">Brain and heart.</text>
</comment>
<comment type="PTM">
    <text evidence="2 3">Autophosphorylated (By similarity). Autophosphorylation at Ser-352 and Ser-356 promotes its activity (By similarity).</text>
</comment>
<comment type="similarity">
    <text evidence="4">Belongs to the protein kinase superfamily. Ser/Thr protein kinase family. WNK subfamily.</text>
</comment>
<comment type="caution">
    <text evidence="1">Was named WNK/'with no lysine(K)' because key residues for catalysis, including the lysine involved in ATP binding, are either not conserved or differ compared to the residues described in other kinase family proteins.</text>
</comment>
<comment type="sequence caution" evidence="11">
    <conflict type="erroneous initiation">
        <sequence resource="EMBL-CDS" id="AAH46464"/>
    </conflict>
    <text>Extended N-terminus.</text>
</comment>
<comment type="sequence caution" evidence="11">
    <conflict type="erroneous initiation">
        <sequence resource="EMBL-CDS" id="AAH55795"/>
    </conflict>
    <text>Truncated N-terminus.</text>
</comment>
<comment type="sequence caution" evidence="11">
    <conflict type="erroneous initiation">
        <sequence resource="EMBL-CDS" id="BAE20646"/>
    </conflict>
    <text>Truncated N-terminus.</text>
</comment>
<sequence length="2149" mass="227527">MDGDGGRRDAPGALMEAGRGTGSAGMAEPRARAARLGPQRFLRRSVVESDQEEPPGLEAAETPSAQPPQPLQRRVLLLCKTRRLIAERARGRPAAPAPAAPAAPPGSPSVPSDPGPERAGTQEPSPDPTTASAAATQVPDGGPRQEEAPAPTQEDAGTTEAKPEPGRARKDEPEEEEDDEDDLKAVATSLDGRFLKFDIELGRGSFKTVYKGLDTETWVEVAWCELQDRKLTKLERQRFKEEAEMLKGLQHPNIVRFYDFWESSAKGKRCIVLVTELMTSGTLKTYLKRFKVMKPKVLRSWCRQILKGLLFLHTRTPPIIHRDLKCDNIFITGPTGSVKIGDLGLATLKRASFAKSVIGTPEFMAPEMYEEHYDESVDVYAFGMCMLEMATSEYPYSECQNAAQIYRKVTCGIKPASFEKVHDPEIKEIIGECICKNKEERYEIKDLLSHAFFAEDTGVRVELAEEDHGRKSTIALRLWVEDPKKLKGKPKDNGAIEFTFDLEKETPDEVAQEMIDSGFFHESDVKIVAKSIRDRVALIQWRRERIWPALQSQEPKDSGSPDKARGLPAPLQVQVTYHAQSGQPGQPEPEEPEADQHLLPPTLPASVTSLASDSTFDSGQGSTVYSDSQSSQQSMVLSSLVDTAPTPASCVCSPPVSEGPGLTHSLPTLGAFQQPATVPGLSVGPVPPPARPPLLQQHFPESSMSFTPVLPPPSTPVPTGPSQPAPPVQQPLPMAQPPTLPQVLAPQPMGTVQPVPSHLPPYLAPTSQVVAPAQLKPLQMPQPPLQPLAQVPPQMPQMPVVPPITPLTGLDGLPQTLTDLPAANVAPVPPPQYFSPAVILPSLTTPLPTSPALPMQAVKLPHPPGTPLAVPCQTIVPNAPAAIPLLAVAPQGVAALSIHPAVAQIPAQPVYPAAFPQMVPGDIPPSPHHTVQSLRATPPQLASPVPPQPVQPSVIHLPEQAAPTAASGTQVLLGHPPSYTADVAAPVSAVSLPPAVLSPPLPDTLLPTVPDLLPKVPSSLAPTVVAASQSAPAQTSSLLLPTNPPLPTGPAVAGPCPAVQLMVEVAQEEQVSQDKPPGPPQSSESFGGSDVTSGRDLSDSCEGTFGGGRLEGRTARKHHRRSTRARSRQERASRPRLTILNVCNTGDKMVECQLETHNHKMVTFKFDLDGDAPDEIATYMVEHDFILPAERETFIEQMKDVMDKAEDMLSEDTDADHGSDTGTSPPHLGTCGLATGEENRQSQANAPVYQQNVLHTGKRWFIICPVAEHPATDTSESSPPLPLSSLQPEASQDPAPYPDQLSLTDKPSFPAAQQLLSQAGSSNPPGGASAPLAPSSPPVTTVIPAAPATSTVPESAAGTAMQAGGPGTHQGPASVHETLQPLAETRSAQCTAQPLSTGQGPCTPALEASRCSTGLGEPISTREVSTQGEPLPASVPEPSPPTGATQSVPGQPPPPLPITVGAISLAAPQLPSPPLGPTAPPPPPSALESDGEGPPPRVGFVDNTIKSLDEKLRTLLYQEHVPTSSASAGTPMEASDRDFTLEPLRGDLPSALSDKTPSLTQQTQPSLEKSETAPAGWALAQREQGASSPMTAESSSSNTLGCDSDAGQVASDSSTAPSVPQDASGSSVPTHMDPKDQNSSVPREALAAPMQSGPGSFTVGSPAQLRGARDSGSPHKRPGQQDNSSPAKTVGRFSVVSTQDEWTLASPHSLRYSAPPDVYLDEIPSSPEVKLAVRRVQTASSIEVGVEEPASSDSGDERPRRRSQVQKQSSLPGTGGVASDFVKKATAFLHRSSRAGSLGPETPSRAGVKVPTISITSFHSQSSYISSDNDSEFEDADIKKELRSLREKHLKEISELQSQQKQEIEALYRRLGKPLPPNVGFFHTAPPMGRRRKTSKSKLKAGKLLNPLVQQLKVVASSTGHLSDSSRGPPTKDPRGTKAVQTQQPCSVRASLSTDICSGLASDGGGARGQGWTVYHPTSERGAYKSSSKPRARFLSGPVSVSIWSALKRLCLGKEHSSSLYDSPGSSTSSLAPGPEPGPQPTLHVQAQVNNSNNKKGTFTDDLHKLVDEWTTKTVGAAQVKPTLNQLKQTQKLHDMEASGDARATSVPRAAVGASCLAPAPGPLSTTATPGATPALPVPIPDPESEKPD</sequence>
<name>WNK2_MOUSE</name>
<protein>
    <recommendedName>
        <fullName evidence="11">Serine/threonine-protein kinase WNK2</fullName>
        <ecNumber evidence="1">2.7.11.1</ecNumber>
    </recommendedName>
    <alternativeName>
        <fullName evidence="13">Protein kinase lysine-deficient 2</fullName>
    </alternativeName>
    <alternativeName>
        <fullName evidence="10">Protein kinase with no lysine 2</fullName>
    </alternativeName>
</protein>
<feature type="chain" id="PRO_0000278774" description="Serine/threonine-protein kinase WNK2">
    <location>
        <begin position="1"/>
        <end position="2149"/>
    </location>
</feature>
<feature type="domain" description="Protein kinase" evidence="4">
    <location>
        <begin position="195"/>
        <end position="453"/>
    </location>
</feature>
<feature type="region of interest" description="Disordered" evidence="5">
    <location>
        <begin position="1"/>
        <end position="75"/>
    </location>
</feature>
<feature type="region of interest" description="Disordered" evidence="5">
    <location>
        <begin position="87"/>
        <end position="183"/>
    </location>
</feature>
<feature type="region of interest" description="Disordered" evidence="5">
    <location>
        <begin position="578"/>
        <end position="630"/>
    </location>
</feature>
<feature type="region of interest" description="Disordered" evidence="5">
    <location>
        <begin position="703"/>
        <end position="728"/>
    </location>
</feature>
<feature type="region of interest" description="Disordered" evidence="5">
    <location>
        <begin position="1067"/>
        <end position="1133"/>
    </location>
</feature>
<feature type="region of interest" description="Disordered" evidence="5">
    <location>
        <begin position="1211"/>
        <end position="1234"/>
    </location>
</feature>
<feature type="region of interest" description="Disordered" evidence="5">
    <location>
        <begin position="1270"/>
        <end position="1502"/>
    </location>
</feature>
<feature type="region of interest" description="Disordered" evidence="5">
    <location>
        <begin position="1521"/>
        <end position="1727"/>
    </location>
</feature>
<feature type="region of interest" description="Disordered" evidence="5">
    <location>
        <begin position="1739"/>
        <end position="1778"/>
    </location>
</feature>
<feature type="region of interest" description="Disordered" evidence="5">
    <location>
        <begin position="1916"/>
        <end position="1947"/>
    </location>
</feature>
<feature type="region of interest" description="Disordered" evidence="5">
    <location>
        <begin position="2018"/>
        <end position="2044"/>
    </location>
</feature>
<feature type="region of interest" description="Disordered" evidence="5">
    <location>
        <begin position="2122"/>
        <end position="2149"/>
    </location>
</feature>
<feature type="compositionally biased region" description="Basic and acidic residues" evidence="5">
    <location>
        <begin position="1"/>
        <end position="10"/>
    </location>
</feature>
<feature type="compositionally biased region" description="Pro residues" evidence="5">
    <location>
        <begin position="95"/>
        <end position="114"/>
    </location>
</feature>
<feature type="compositionally biased region" description="Basic and acidic residues" evidence="5">
    <location>
        <begin position="161"/>
        <end position="172"/>
    </location>
</feature>
<feature type="compositionally biased region" description="Acidic residues" evidence="5">
    <location>
        <begin position="173"/>
        <end position="182"/>
    </location>
</feature>
<feature type="compositionally biased region" description="Polar residues" evidence="5">
    <location>
        <begin position="605"/>
        <end position="625"/>
    </location>
</feature>
<feature type="compositionally biased region" description="Pro residues" evidence="5">
    <location>
        <begin position="709"/>
        <end position="728"/>
    </location>
</feature>
<feature type="compositionally biased region" description="Polar residues" evidence="5">
    <location>
        <begin position="1081"/>
        <end position="1092"/>
    </location>
</feature>
<feature type="compositionally biased region" description="Basic residues" evidence="5">
    <location>
        <begin position="1115"/>
        <end position="1126"/>
    </location>
</feature>
<feature type="compositionally biased region" description="Low complexity" evidence="5">
    <location>
        <begin position="1275"/>
        <end position="1292"/>
    </location>
</feature>
<feature type="compositionally biased region" description="Low complexity" evidence="5">
    <location>
        <begin position="1317"/>
        <end position="1353"/>
    </location>
</feature>
<feature type="compositionally biased region" description="Polar residues" evidence="5">
    <location>
        <begin position="1386"/>
        <end position="1400"/>
    </location>
</feature>
<feature type="compositionally biased region" description="Pro residues" evidence="5">
    <location>
        <begin position="1470"/>
        <end position="1485"/>
    </location>
</feature>
<feature type="compositionally biased region" description="Polar residues" evidence="5">
    <location>
        <begin position="1553"/>
        <end position="1567"/>
    </location>
</feature>
<feature type="compositionally biased region" description="Low complexity" evidence="5">
    <location>
        <begin position="1587"/>
        <end position="1597"/>
    </location>
</feature>
<feature type="compositionally biased region" description="Polar residues" evidence="5">
    <location>
        <begin position="1610"/>
        <end position="1629"/>
    </location>
</feature>
<feature type="compositionally biased region" description="Polar residues" evidence="5">
    <location>
        <begin position="1916"/>
        <end position="1928"/>
    </location>
</feature>
<feature type="compositionally biased region" description="Polar residues" evidence="5">
    <location>
        <begin position="2018"/>
        <end position="2031"/>
    </location>
</feature>
<feature type="compositionally biased region" description="Low complexity" evidence="5">
    <location>
        <begin position="2122"/>
        <end position="2135"/>
    </location>
</feature>
<feature type="active site" description="Proton acceptor" evidence="2">
    <location>
        <position position="342"/>
    </location>
</feature>
<feature type="binding site" evidence="1">
    <location>
        <position position="205"/>
    </location>
    <ligand>
        <name>ATP</name>
        <dbReference type="ChEBI" id="CHEBI:30616"/>
    </ligand>
</feature>
<feature type="binding site" evidence="1">
    <location>
        <begin position="275"/>
        <end position="278"/>
    </location>
    <ligand>
        <name>ATP</name>
        <dbReference type="ChEBI" id="CHEBI:30616"/>
    </ligand>
</feature>
<feature type="binding site" evidence="1">
    <location>
        <position position="325"/>
    </location>
    <ligand>
        <name>ATP</name>
        <dbReference type="ChEBI" id="CHEBI:30616"/>
    </ligand>
</feature>
<feature type="modified residue" description="Omega-N-methylarginine" evidence="15">
    <location>
        <position position="19"/>
    </location>
</feature>
<feature type="modified residue" description="Omega-N-methylarginine" evidence="15">
    <location>
        <position position="30"/>
    </location>
</feature>
<feature type="modified residue" description="Phosphoserine" evidence="3">
    <location>
        <position position="45"/>
    </location>
</feature>
<feature type="modified residue" description="Phosphoserine; by autocatalysis" evidence="2">
    <location>
        <position position="352"/>
    </location>
</feature>
<feature type="modified residue" description="Phosphoserine; by autocatalysis" evidence="2">
    <location>
        <position position="356"/>
    </location>
</feature>
<feature type="modified residue" description="Phosphoserine" evidence="3">
    <location>
        <position position="560"/>
    </location>
</feature>
<feature type="modified residue" description="Phosphoserine" evidence="3">
    <location>
        <position position="1098"/>
    </location>
</feature>
<feature type="modified residue" description="Phosphoserine" evidence="3">
    <location>
        <position position="1210"/>
    </location>
</feature>
<feature type="modified residue" description="Phosphoserine" evidence="3">
    <location>
        <position position="1507"/>
    </location>
</feature>
<feature type="modified residue" description="Phosphoserine" evidence="6">
    <location>
        <position position="1566"/>
    </location>
</feature>
<feature type="modified residue" description="Phosphoserine" evidence="3">
    <location>
        <position position="1594"/>
    </location>
</feature>
<feature type="modified residue" description="Phosphoserine" evidence="14">
    <location>
        <position position="1725"/>
    </location>
</feature>
<feature type="modified residue" description="Phosphoserine" evidence="14">
    <location>
        <position position="1726"/>
    </location>
</feature>
<feature type="modified residue" description="Phosphoserine" evidence="6">
    <location>
        <position position="1770"/>
    </location>
</feature>
<feature type="modified residue" description="Phosphoserine" evidence="6">
    <location>
        <position position="1797"/>
    </location>
</feature>
<feature type="modified residue" description="Phosphoserine" evidence="3">
    <location>
        <position position="1962"/>
    </location>
</feature>
<feature type="splice variant" id="VSP_023366" description="In isoform 6." evidence="8">
    <location>
        <begin position="731"/>
        <end position="742"/>
    </location>
</feature>
<feature type="splice variant" id="VSP_023367" description="In isoform 6 and isoform 7." evidence="7 8">
    <location>
        <begin position="971"/>
        <end position="1068"/>
    </location>
</feature>
<feature type="splice variant" id="VSP_023368" description="In isoform 7." evidence="7">
    <original>AE</original>
    <variation>E</variation>
    <location>
        <begin position="1592"/>
        <end position="1593"/>
    </location>
</feature>
<feature type="splice variant" id="VSP_023369" description="In isoform 2." evidence="9">
    <location>
        <begin position="1921"/>
        <end position="2004"/>
    </location>
</feature>
<feature type="splice variant" id="VSP_023370" description="In isoform 3, isoform 4, isoform 5, isoform 6 and isoform 7." evidence="7 8 9">
    <original>R</original>
    <variation>AHASTPP</variation>
    <location>
        <position position="1935"/>
    </location>
</feature>
<feature type="splice variant" id="VSP_023371" description="In isoform 4 and isoform 6." evidence="8">
    <location>
        <begin position="1971"/>
        <end position="2024"/>
    </location>
</feature>
<feature type="splice variant" id="VSP_023372" description="In isoform 3, isoform 5 and isoform 7." evidence="7 8 9">
    <original>SLYDSPG</original>
    <variation>R</variation>
    <location>
        <begin position="2019"/>
        <end position="2025"/>
    </location>
</feature>
<feature type="splice variant" id="VSP_023373" description="In isoform 5." evidence="9">
    <original>DPESEKPD</original>
    <variation>GTVHSSLSGPPCTLPLCQYGGLLPDPVSWGPWVASGNPEGSWGSQSPTQVPVFPVFLRPPVISTPGPRLHIT</variation>
    <location>
        <begin position="2142"/>
        <end position="2149"/>
    </location>
</feature>
<feature type="splice variant" id="VSP_023374" description="In isoform 7." evidence="7">
    <original>DPESEKPD</original>
    <variation>EACALPTPPCKFLSRPSSGQPTEGRSISGGFHDTCPGGERGDENSLTPSG</variation>
    <location>
        <begin position="2142"/>
        <end position="2149"/>
    </location>
</feature>
<feature type="sequence conflict" description="In Ref. 4; BAC98249." evidence="11" ref="4">
    <original>PYLAPTSQVVAPAQLKPLQMPQPPLQPLAQVPPQ</original>
    <variation>RRYLWPIFCSPQGWGTRPWTRPVHACLQGLLARE</variation>
    <location>
        <begin position="761"/>
        <end position="794"/>
    </location>
</feature>
<gene>
    <name evidence="13" type="primary">Wnk2</name>
    <name evidence="12" type="synonym">Kiaa1760</name>
</gene>
<evidence type="ECO:0000250" key="1">
    <source>
        <dbReference type="UniProtKB" id="Q9H4A3"/>
    </source>
</evidence>
<evidence type="ECO:0000250" key="2">
    <source>
        <dbReference type="UniProtKB" id="Q9JIH7"/>
    </source>
</evidence>
<evidence type="ECO:0000250" key="3">
    <source>
        <dbReference type="UniProtKB" id="Q9Y3S1"/>
    </source>
</evidence>
<evidence type="ECO:0000255" key="4">
    <source>
        <dbReference type="PROSITE-ProRule" id="PRU00159"/>
    </source>
</evidence>
<evidence type="ECO:0000256" key="5">
    <source>
        <dbReference type="SAM" id="MobiDB-lite"/>
    </source>
</evidence>
<evidence type="ECO:0000269" key="6">
    <source>
    </source>
</evidence>
<evidence type="ECO:0000303" key="7">
    <source>
    </source>
</evidence>
<evidence type="ECO:0000303" key="8">
    <source>
    </source>
</evidence>
<evidence type="ECO:0000303" key="9">
    <source>
    </source>
</evidence>
<evidence type="ECO:0000303" key="10">
    <source>
    </source>
</evidence>
<evidence type="ECO:0000305" key="11"/>
<evidence type="ECO:0000312" key="12">
    <source>
        <dbReference type="EMBL" id="BAC98249.1"/>
    </source>
</evidence>
<evidence type="ECO:0000312" key="13">
    <source>
        <dbReference type="MGI" id="MGI:1922857"/>
    </source>
</evidence>
<evidence type="ECO:0007744" key="14">
    <source>
    </source>
</evidence>
<evidence type="ECO:0007744" key="15">
    <source>
    </source>
</evidence>